<proteinExistence type="evidence at protein level"/>
<protein>
    <recommendedName>
        <fullName evidence="5">NADH-dependent FMN reductase SfnE</fullName>
        <ecNumber evidence="7 8">1.5.1.42</ecNumber>
    </recommendedName>
</protein>
<gene>
    <name evidence="4" type="primary">sfnE</name>
</gene>
<accession>Q845S9</accession>
<organism>
    <name type="scientific">Pseudomonas putida</name>
    <name type="common">Arthrobacter siderocapsulatus</name>
    <dbReference type="NCBI Taxonomy" id="303"/>
    <lineage>
        <taxon>Bacteria</taxon>
        <taxon>Pseudomonadati</taxon>
        <taxon>Pseudomonadota</taxon>
        <taxon>Gammaproteobacteria</taxon>
        <taxon>Pseudomonadales</taxon>
        <taxon>Pseudomonadaceae</taxon>
        <taxon>Pseudomonas</taxon>
    </lineage>
</organism>
<comment type="function">
    <text evidence="1 2 3">Involved in the dimethyl sulfide degradation pathway (PubMed:12686641, PubMed:12835925). Catalyzes the NADH-dependent reduction of FMN (PubMed:12835925, PubMed:15661012).</text>
</comment>
<comment type="catalytic activity">
    <reaction evidence="7 8">
        <text>FMNH2 + NAD(+) = FMN + NADH + 2 H(+)</text>
        <dbReference type="Rhea" id="RHEA:21620"/>
        <dbReference type="ChEBI" id="CHEBI:15378"/>
        <dbReference type="ChEBI" id="CHEBI:57540"/>
        <dbReference type="ChEBI" id="CHEBI:57618"/>
        <dbReference type="ChEBI" id="CHEBI:57945"/>
        <dbReference type="ChEBI" id="CHEBI:58210"/>
        <dbReference type="EC" id="1.5.1.42"/>
    </reaction>
</comment>
<comment type="induction">
    <text evidence="1">Under sulfate limitation conditions, it is transcriptionally activated by the LysR-type transcriptional regulator, CysB.</text>
</comment>
<comment type="similarity">
    <text evidence="6">Belongs to the SsuE family.</text>
</comment>
<reference key="1">
    <citation type="journal article" date="2003" name="Appl. Microbiol. Biotechnol.">
        <title>Characterization and identification of genes essential for dimethyl sulfide utilization in Pseudomonas putida strain DS1.</title>
        <authorList>
            <person name="Endoh T."/>
            <person name="Kasuga K."/>
            <person name="Horinouchi M."/>
            <person name="Yoshida T."/>
            <person name="Habe H."/>
            <person name="Nojiri H."/>
            <person name="Omori T."/>
        </authorList>
    </citation>
    <scope>NUCLEOTIDE SEQUENCE [GENOMIC DNA]</scope>
    <scope>FUNCTION</scope>
    <scope>CATALYTIC ACTIVITY</scope>
    <source>
        <strain evidence="9">DS1</strain>
    </source>
</reference>
<reference evidence="9" key="2">
    <citation type="journal article" date="2003" name="Microbiology">
        <title>A CysB-regulated and sigma54-dependent regulator, SfnR, is essential for dimethyl sulfone metabolism of Pseudomonas putida strain DS1.</title>
        <authorList>
            <person name="Endoh T."/>
            <person name="Habe H."/>
            <person name="Yoshida T."/>
            <person name="Nojiri H."/>
            <person name="Omori T."/>
        </authorList>
    </citation>
    <scope>NUCLEOTIDE SEQUENCE [GENOMIC DNA]</scope>
    <scope>FUNCTION</scope>
    <scope>INDUCTION</scope>
    <source>
        <strain evidence="9">DS1</strain>
    </source>
</reference>
<reference key="3">
    <citation type="journal article" date="2005" name="Mol. Microbiol.">
        <title>The sigma54-dependent transcriptional activator SfnR regulates the expression of the Pseudomonas putida sfnFG operon responsible for dimethyl sulphone utilization.</title>
        <authorList>
            <person name="Endoh T."/>
            <person name="Habe H."/>
            <person name="Nojiri H."/>
            <person name="Yamane H."/>
            <person name="Omori T."/>
        </authorList>
    </citation>
    <scope>FUNCTION</scope>
    <scope>CATALYTIC ACTIVITY</scope>
    <source>
        <strain>DS1</strain>
    </source>
</reference>
<dbReference type="EC" id="1.5.1.42" evidence="7 8"/>
<dbReference type="EMBL" id="AB091764">
    <property type="protein sequence ID" value="BAC66051.1"/>
    <property type="molecule type" value="Genomic_DNA"/>
</dbReference>
<dbReference type="SMR" id="Q845S9"/>
<dbReference type="GO" id="GO:0052874">
    <property type="term" value="F:FMN reductase (NADH) activity"/>
    <property type="evidence" value="ECO:0007669"/>
    <property type="project" value="UniProtKB-EC"/>
</dbReference>
<dbReference type="GO" id="GO:0016655">
    <property type="term" value="F:oxidoreductase activity, acting on NAD(P)H, quinone or similar compound as acceptor"/>
    <property type="evidence" value="ECO:0007669"/>
    <property type="project" value="UniProtKB-ARBA"/>
</dbReference>
<dbReference type="Gene3D" id="3.40.50.360">
    <property type="match status" value="1"/>
</dbReference>
<dbReference type="InterPro" id="IPR029039">
    <property type="entry name" value="Flavoprotein-like_sf"/>
</dbReference>
<dbReference type="InterPro" id="IPR005025">
    <property type="entry name" value="FMN_Rdtase-like_dom"/>
</dbReference>
<dbReference type="InterPro" id="IPR019912">
    <property type="entry name" value="FMN_Rdtase_MsuE-like"/>
</dbReference>
<dbReference type="InterPro" id="IPR051814">
    <property type="entry name" value="NAD(P)H-dep_FMN_reductase"/>
</dbReference>
<dbReference type="NCBIfam" id="TIGR03566">
    <property type="entry name" value="FMN_reduc_MsuE"/>
    <property type="match status" value="1"/>
</dbReference>
<dbReference type="PANTHER" id="PTHR43408">
    <property type="entry name" value="FMN REDUCTASE (NADPH)"/>
    <property type="match status" value="1"/>
</dbReference>
<dbReference type="PANTHER" id="PTHR43408:SF2">
    <property type="entry name" value="FMN REDUCTASE (NADPH)"/>
    <property type="match status" value="1"/>
</dbReference>
<dbReference type="Pfam" id="PF03358">
    <property type="entry name" value="FMN_red"/>
    <property type="match status" value="1"/>
</dbReference>
<dbReference type="SUPFAM" id="SSF52218">
    <property type="entry name" value="Flavoproteins"/>
    <property type="match status" value="1"/>
</dbReference>
<name>SFNE_PSEPU</name>
<keyword id="KW-0285">Flavoprotein</keyword>
<keyword id="KW-0288">FMN</keyword>
<keyword id="KW-0520">NAD</keyword>
<keyword id="KW-0560">Oxidoreductase</keyword>
<evidence type="ECO:0000269" key="1">
    <source>
    </source>
</evidence>
<evidence type="ECO:0000269" key="2">
    <source>
    </source>
</evidence>
<evidence type="ECO:0000269" key="3">
    <source>
    </source>
</evidence>
<evidence type="ECO:0000303" key="4">
    <source>
    </source>
</evidence>
<evidence type="ECO:0000303" key="5">
    <source>
    </source>
</evidence>
<evidence type="ECO:0000305" key="6"/>
<evidence type="ECO:0000305" key="7">
    <source>
    </source>
</evidence>
<evidence type="ECO:0000305" key="8">
    <source>
    </source>
</evidence>
<evidence type="ECO:0000312" key="9">
    <source>
        <dbReference type="EMBL" id="BAC66051.1"/>
    </source>
</evidence>
<feature type="chain" id="PRO_0000443542" description="NADH-dependent FMN reductase SfnE">
    <location>
        <begin position="1"/>
        <end position="186"/>
    </location>
</feature>
<sequence>MSTPLNVVALSGGTSRPSRTLALTEAILAELAEHLHIKPHLIELGEIARPLGSALWRSELPEAVEQQLRLVEKADLLVVTTPVYRGSFTGHFKHLFDLIGQDALVDTPVLLAATGGSERHALVLDHQLRPLFSFLQALTLPIGVFASQAEMADYRVSSAALAARIRLAAERAVPLFGAHHALRKSA</sequence>